<organism>
    <name type="scientific">Verminephrobacter eiseniae (strain EF01-2)</name>
    <dbReference type="NCBI Taxonomy" id="391735"/>
    <lineage>
        <taxon>Bacteria</taxon>
        <taxon>Pseudomonadati</taxon>
        <taxon>Pseudomonadota</taxon>
        <taxon>Betaproteobacteria</taxon>
        <taxon>Burkholderiales</taxon>
        <taxon>Comamonadaceae</taxon>
        <taxon>Verminephrobacter</taxon>
    </lineage>
</organism>
<gene>
    <name evidence="1" type="primary">rpsN</name>
    <name type="ordered locus">Veis_2312</name>
</gene>
<protein>
    <recommendedName>
        <fullName evidence="1">Small ribosomal subunit protein uS14</fullName>
    </recommendedName>
    <alternativeName>
        <fullName evidence="3">30S ribosomal protein S14</fullName>
    </alternativeName>
</protein>
<sequence>MAKVALIQRELKREKLVAKYAKKYVQLKAIAGDAKRSDAEREAARLGLQKLPRNANPTRQRNRCAITGRPRGTFRQFGLARAKIREMAFAGDIPGITKASW</sequence>
<dbReference type="EMBL" id="CP000542">
    <property type="protein sequence ID" value="ABM58060.1"/>
    <property type="molecule type" value="Genomic_DNA"/>
</dbReference>
<dbReference type="RefSeq" id="WP_011810063.1">
    <property type="nucleotide sequence ID" value="NC_008786.1"/>
</dbReference>
<dbReference type="SMR" id="A1WKA3"/>
<dbReference type="STRING" id="391735.Veis_2312"/>
<dbReference type="GeneID" id="76460877"/>
<dbReference type="KEGG" id="vei:Veis_2312"/>
<dbReference type="eggNOG" id="COG0199">
    <property type="taxonomic scope" value="Bacteria"/>
</dbReference>
<dbReference type="HOGENOM" id="CLU_139869_0_1_4"/>
<dbReference type="OrthoDB" id="9810484at2"/>
<dbReference type="Proteomes" id="UP000000374">
    <property type="component" value="Chromosome"/>
</dbReference>
<dbReference type="GO" id="GO:0005737">
    <property type="term" value="C:cytoplasm"/>
    <property type="evidence" value="ECO:0007669"/>
    <property type="project" value="UniProtKB-ARBA"/>
</dbReference>
<dbReference type="GO" id="GO:0015935">
    <property type="term" value="C:small ribosomal subunit"/>
    <property type="evidence" value="ECO:0007669"/>
    <property type="project" value="TreeGrafter"/>
</dbReference>
<dbReference type="GO" id="GO:0019843">
    <property type="term" value="F:rRNA binding"/>
    <property type="evidence" value="ECO:0007669"/>
    <property type="project" value="UniProtKB-UniRule"/>
</dbReference>
<dbReference type="GO" id="GO:0003735">
    <property type="term" value="F:structural constituent of ribosome"/>
    <property type="evidence" value="ECO:0007669"/>
    <property type="project" value="InterPro"/>
</dbReference>
<dbReference type="GO" id="GO:0006412">
    <property type="term" value="P:translation"/>
    <property type="evidence" value="ECO:0007669"/>
    <property type="project" value="UniProtKB-UniRule"/>
</dbReference>
<dbReference type="FunFam" id="1.10.287.1480:FF:000001">
    <property type="entry name" value="30S ribosomal protein S14"/>
    <property type="match status" value="1"/>
</dbReference>
<dbReference type="Gene3D" id="1.10.287.1480">
    <property type="match status" value="1"/>
</dbReference>
<dbReference type="HAMAP" id="MF_00537">
    <property type="entry name" value="Ribosomal_uS14_1"/>
    <property type="match status" value="1"/>
</dbReference>
<dbReference type="InterPro" id="IPR001209">
    <property type="entry name" value="Ribosomal_uS14"/>
</dbReference>
<dbReference type="InterPro" id="IPR023036">
    <property type="entry name" value="Ribosomal_uS14_bac/plastid"/>
</dbReference>
<dbReference type="NCBIfam" id="NF006477">
    <property type="entry name" value="PRK08881.1"/>
    <property type="match status" value="1"/>
</dbReference>
<dbReference type="PANTHER" id="PTHR19836">
    <property type="entry name" value="30S RIBOSOMAL PROTEIN S14"/>
    <property type="match status" value="1"/>
</dbReference>
<dbReference type="PANTHER" id="PTHR19836:SF19">
    <property type="entry name" value="SMALL RIBOSOMAL SUBUNIT PROTEIN US14M"/>
    <property type="match status" value="1"/>
</dbReference>
<dbReference type="Pfam" id="PF00253">
    <property type="entry name" value="Ribosomal_S14"/>
    <property type="match status" value="1"/>
</dbReference>
<dbReference type="SUPFAM" id="SSF57716">
    <property type="entry name" value="Glucocorticoid receptor-like (DNA-binding domain)"/>
    <property type="match status" value="1"/>
</dbReference>
<comment type="function">
    <text evidence="1">Binds 16S rRNA, required for the assembly of 30S particles and may also be responsible for determining the conformation of the 16S rRNA at the A site.</text>
</comment>
<comment type="subunit">
    <text evidence="1">Part of the 30S ribosomal subunit. Contacts proteins S3 and S10.</text>
</comment>
<comment type="similarity">
    <text evidence="1">Belongs to the universal ribosomal protein uS14 family.</text>
</comment>
<reference key="1">
    <citation type="submission" date="2006-12" db="EMBL/GenBank/DDBJ databases">
        <title>Complete sequence of chromosome 1 of Verminephrobacter eiseniae EF01-2.</title>
        <authorList>
            <person name="Copeland A."/>
            <person name="Lucas S."/>
            <person name="Lapidus A."/>
            <person name="Barry K."/>
            <person name="Detter J.C."/>
            <person name="Glavina del Rio T."/>
            <person name="Dalin E."/>
            <person name="Tice H."/>
            <person name="Pitluck S."/>
            <person name="Chertkov O."/>
            <person name="Brettin T."/>
            <person name="Bruce D."/>
            <person name="Han C."/>
            <person name="Tapia R."/>
            <person name="Gilna P."/>
            <person name="Schmutz J."/>
            <person name="Larimer F."/>
            <person name="Land M."/>
            <person name="Hauser L."/>
            <person name="Kyrpides N."/>
            <person name="Kim E."/>
            <person name="Stahl D."/>
            <person name="Richardson P."/>
        </authorList>
    </citation>
    <scope>NUCLEOTIDE SEQUENCE [LARGE SCALE GENOMIC DNA]</scope>
    <source>
        <strain>EF01-2</strain>
    </source>
</reference>
<feature type="chain" id="PRO_1000128626" description="Small ribosomal subunit protein uS14">
    <location>
        <begin position="1"/>
        <end position="101"/>
    </location>
</feature>
<feature type="region of interest" description="Disordered" evidence="2">
    <location>
        <begin position="32"/>
        <end position="62"/>
    </location>
</feature>
<feature type="compositionally biased region" description="Basic and acidic residues" evidence="2">
    <location>
        <begin position="33"/>
        <end position="44"/>
    </location>
</feature>
<keyword id="KW-1185">Reference proteome</keyword>
<keyword id="KW-0687">Ribonucleoprotein</keyword>
<keyword id="KW-0689">Ribosomal protein</keyword>
<keyword id="KW-0694">RNA-binding</keyword>
<keyword id="KW-0699">rRNA-binding</keyword>
<proteinExistence type="inferred from homology"/>
<evidence type="ECO:0000255" key="1">
    <source>
        <dbReference type="HAMAP-Rule" id="MF_00537"/>
    </source>
</evidence>
<evidence type="ECO:0000256" key="2">
    <source>
        <dbReference type="SAM" id="MobiDB-lite"/>
    </source>
</evidence>
<evidence type="ECO:0000305" key="3"/>
<accession>A1WKA3</accession>
<name>RS14_VEREI</name>